<sequence length="206" mass="22076">MTDTPTKQEIQSKNDNVPGATPVEQKKNNRNDRKRNRRGDSKNLERDSDWQERVVQIRRVSKTVKGGKKMSFRAIVVVGNEKGQVGVGVGKAGDVIGAVRKGVSDGKKNLVRVPLTPNNSIPTLSLGRDGAANVLIRPAAPGTGVIAGGSIRTVLELAGIKNVLAKRLGSKTPLNNARAAMVALSQLRTHKSASKERGISLEQLYS</sequence>
<dbReference type="EMBL" id="CP000576">
    <property type="protein sequence ID" value="ABO18356.1"/>
    <property type="molecule type" value="Genomic_DNA"/>
</dbReference>
<dbReference type="RefSeq" id="WP_011863648.1">
    <property type="nucleotide sequence ID" value="NC_009091.1"/>
</dbReference>
<dbReference type="SMR" id="A3PF31"/>
<dbReference type="STRING" id="167546.P9301_17331"/>
<dbReference type="KEGG" id="pmg:P9301_17331"/>
<dbReference type="eggNOG" id="COG0098">
    <property type="taxonomic scope" value="Bacteria"/>
</dbReference>
<dbReference type="HOGENOM" id="CLU_065898_2_2_3"/>
<dbReference type="OrthoDB" id="9809045at2"/>
<dbReference type="Proteomes" id="UP000001430">
    <property type="component" value="Chromosome"/>
</dbReference>
<dbReference type="GO" id="GO:0015935">
    <property type="term" value="C:small ribosomal subunit"/>
    <property type="evidence" value="ECO:0007669"/>
    <property type="project" value="InterPro"/>
</dbReference>
<dbReference type="GO" id="GO:0019843">
    <property type="term" value="F:rRNA binding"/>
    <property type="evidence" value="ECO:0007669"/>
    <property type="project" value="UniProtKB-UniRule"/>
</dbReference>
<dbReference type="GO" id="GO:0003735">
    <property type="term" value="F:structural constituent of ribosome"/>
    <property type="evidence" value="ECO:0007669"/>
    <property type="project" value="InterPro"/>
</dbReference>
<dbReference type="GO" id="GO:0006412">
    <property type="term" value="P:translation"/>
    <property type="evidence" value="ECO:0007669"/>
    <property type="project" value="UniProtKB-UniRule"/>
</dbReference>
<dbReference type="FunFam" id="3.30.160.20:FF:000001">
    <property type="entry name" value="30S ribosomal protein S5"/>
    <property type="match status" value="1"/>
</dbReference>
<dbReference type="FunFam" id="3.30.230.10:FF:000002">
    <property type="entry name" value="30S ribosomal protein S5"/>
    <property type="match status" value="1"/>
</dbReference>
<dbReference type="Gene3D" id="3.30.160.20">
    <property type="match status" value="1"/>
</dbReference>
<dbReference type="Gene3D" id="3.30.230.10">
    <property type="match status" value="1"/>
</dbReference>
<dbReference type="HAMAP" id="MF_01307_B">
    <property type="entry name" value="Ribosomal_uS5_B"/>
    <property type="match status" value="1"/>
</dbReference>
<dbReference type="InterPro" id="IPR020568">
    <property type="entry name" value="Ribosomal_Su5_D2-typ_SF"/>
</dbReference>
<dbReference type="InterPro" id="IPR000851">
    <property type="entry name" value="Ribosomal_uS5"/>
</dbReference>
<dbReference type="InterPro" id="IPR005712">
    <property type="entry name" value="Ribosomal_uS5_bac-type"/>
</dbReference>
<dbReference type="InterPro" id="IPR005324">
    <property type="entry name" value="Ribosomal_uS5_C"/>
</dbReference>
<dbReference type="InterPro" id="IPR013810">
    <property type="entry name" value="Ribosomal_uS5_N"/>
</dbReference>
<dbReference type="InterPro" id="IPR018192">
    <property type="entry name" value="Ribosomal_uS5_N_CS"/>
</dbReference>
<dbReference type="InterPro" id="IPR014721">
    <property type="entry name" value="Ribsml_uS5_D2-typ_fold_subgr"/>
</dbReference>
<dbReference type="NCBIfam" id="TIGR01021">
    <property type="entry name" value="rpsE_bact"/>
    <property type="match status" value="1"/>
</dbReference>
<dbReference type="PANTHER" id="PTHR48277">
    <property type="entry name" value="MITOCHONDRIAL RIBOSOMAL PROTEIN S5"/>
    <property type="match status" value="1"/>
</dbReference>
<dbReference type="PANTHER" id="PTHR48277:SF1">
    <property type="entry name" value="MITOCHONDRIAL RIBOSOMAL PROTEIN S5"/>
    <property type="match status" value="1"/>
</dbReference>
<dbReference type="Pfam" id="PF00333">
    <property type="entry name" value="Ribosomal_S5"/>
    <property type="match status" value="1"/>
</dbReference>
<dbReference type="Pfam" id="PF03719">
    <property type="entry name" value="Ribosomal_S5_C"/>
    <property type="match status" value="1"/>
</dbReference>
<dbReference type="SUPFAM" id="SSF54768">
    <property type="entry name" value="dsRNA-binding domain-like"/>
    <property type="match status" value="1"/>
</dbReference>
<dbReference type="SUPFAM" id="SSF54211">
    <property type="entry name" value="Ribosomal protein S5 domain 2-like"/>
    <property type="match status" value="1"/>
</dbReference>
<dbReference type="PROSITE" id="PS00585">
    <property type="entry name" value="RIBOSOMAL_S5"/>
    <property type="match status" value="1"/>
</dbReference>
<dbReference type="PROSITE" id="PS50881">
    <property type="entry name" value="S5_DSRBD"/>
    <property type="match status" value="1"/>
</dbReference>
<feature type="chain" id="PRO_1000086036" description="Small ribosomal subunit protein uS5">
    <location>
        <begin position="1"/>
        <end position="206"/>
    </location>
</feature>
<feature type="domain" description="S5 DRBM" evidence="1">
    <location>
        <begin position="50"/>
        <end position="113"/>
    </location>
</feature>
<feature type="region of interest" description="Disordered" evidence="2">
    <location>
        <begin position="1"/>
        <end position="50"/>
    </location>
</feature>
<feature type="compositionally biased region" description="Polar residues" evidence="2">
    <location>
        <begin position="1"/>
        <end position="15"/>
    </location>
</feature>
<feature type="compositionally biased region" description="Basic and acidic residues" evidence="2">
    <location>
        <begin position="38"/>
        <end position="50"/>
    </location>
</feature>
<protein>
    <recommendedName>
        <fullName evidence="1">Small ribosomal subunit protein uS5</fullName>
    </recommendedName>
    <alternativeName>
        <fullName evidence="3">30S ribosomal protein S5</fullName>
    </alternativeName>
</protein>
<organism>
    <name type="scientific">Prochlorococcus marinus (strain MIT 9301)</name>
    <dbReference type="NCBI Taxonomy" id="167546"/>
    <lineage>
        <taxon>Bacteria</taxon>
        <taxon>Bacillati</taxon>
        <taxon>Cyanobacteriota</taxon>
        <taxon>Cyanophyceae</taxon>
        <taxon>Synechococcales</taxon>
        <taxon>Prochlorococcaceae</taxon>
        <taxon>Prochlorococcus</taxon>
    </lineage>
</organism>
<evidence type="ECO:0000255" key="1">
    <source>
        <dbReference type="HAMAP-Rule" id="MF_01307"/>
    </source>
</evidence>
<evidence type="ECO:0000256" key="2">
    <source>
        <dbReference type="SAM" id="MobiDB-lite"/>
    </source>
</evidence>
<evidence type="ECO:0000305" key="3"/>
<reference key="1">
    <citation type="journal article" date="2007" name="PLoS Genet.">
        <title>Patterns and implications of gene gain and loss in the evolution of Prochlorococcus.</title>
        <authorList>
            <person name="Kettler G.C."/>
            <person name="Martiny A.C."/>
            <person name="Huang K."/>
            <person name="Zucker J."/>
            <person name="Coleman M.L."/>
            <person name="Rodrigue S."/>
            <person name="Chen F."/>
            <person name="Lapidus A."/>
            <person name="Ferriera S."/>
            <person name="Johnson J."/>
            <person name="Steglich C."/>
            <person name="Church G.M."/>
            <person name="Richardson P."/>
            <person name="Chisholm S.W."/>
        </authorList>
    </citation>
    <scope>NUCLEOTIDE SEQUENCE [LARGE SCALE GENOMIC DNA]</scope>
    <source>
        <strain>MIT 9301</strain>
    </source>
</reference>
<keyword id="KW-1185">Reference proteome</keyword>
<keyword id="KW-0687">Ribonucleoprotein</keyword>
<keyword id="KW-0689">Ribosomal protein</keyword>
<keyword id="KW-0694">RNA-binding</keyword>
<keyword id="KW-0699">rRNA-binding</keyword>
<proteinExistence type="inferred from homology"/>
<accession>A3PF31</accession>
<gene>
    <name evidence="1" type="primary">rpsE</name>
    <name evidence="1" type="synonym">rps5</name>
    <name type="ordered locus">P9301_17331</name>
</gene>
<comment type="function">
    <text evidence="1">With S4 and S12 plays an important role in translational accuracy.</text>
</comment>
<comment type="function">
    <text evidence="1">Located at the back of the 30S subunit body where it stabilizes the conformation of the head with respect to the body.</text>
</comment>
<comment type="subunit">
    <text evidence="1">Part of the 30S ribosomal subunit. Contacts proteins S4 and S8.</text>
</comment>
<comment type="domain">
    <text>The N-terminal domain interacts with the head of the 30S subunit; the C-terminal domain interacts with the body and contacts protein S4. The interaction surface between S4 and S5 is involved in control of translational fidelity.</text>
</comment>
<comment type="similarity">
    <text evidence="1">Belongs to the universal ribosomal protein uS5 family.</text>
</comment>
<name>RS5_PROM0</name>